<evidence type="ECO:0000255" key="1">
    <source>
        <dbReference type="HAMAP-Rule" id="MF_00013"/>
    </source>
</evidence>
<evidence type="ECO:0000255" key="2">
    <source>
        <dbReference type="PROSITE-ProRule" id="PRU01067"/>
    </source>
</evidence>
<protein>
    <recommendedName>
        <fullName evidence="1">Octanoyltransferase</fullName>
        <ecNumber evidence="1">2.3.1.181</ecNumber>
    </recommendedName>
    <alternativeName>
        <fullName evidence="1">Lipoate-protein ligase B</fullName>
    </alternativeName>
    <alternativeName>
        <fullName evidence="1">Lipoyl/octanoyl transferase</fullName>
    </alternativeName>
    <alternativeName>
        <fullName evidence="1">Octanoyl-[acyl-carrier-protein]-protein N-octanoyltransferase</fullName>
    </alternativeName>
</protein>
<reference key="1">
    <citation type="journal article" date="2006" name="Nat. Biotechnol.">
        <title>Complete genome sequence of the entomopathogenic and metabolically versatile soil bacterium Pseudomonas entomophila.</title>
        <authorList>
            <person name="Vodovar N."/>
            <person name="Vallenet D."/>
            <person name="Cruveiller S."/>
            <person name="Rouy Z."/>
            <person name="Barbe V."/>
            <person name="Acosta C."/>
            <person name="Cattolico L."/>
            <person name="Jubin C."/>
            <person name="Lajus A."/>
            <person name="Segurens B."/>
            <person name="Vacherie B."/>
            <person name="Wincker P."/>
            <person name="Weissenbach J."/>
            <person name="Lemaitre B."/>
            <person name="Medigue C."/>
            <person name="Boccard F."/>
        </authorList>
    </citation>
    <scope>NUCLEOTIDE SEQUENCE [LARGE SCALE GENOMIC DNA]</scope>
    <source>
        <strain>L48</strain>
    </source>
</reference>
<dbReference type="EC" id="2.3.1.181" evidence="1"/>
<dbReference type="EMBL" id="CT573326">
    <property type="protein sequence ID" value="CAK17476.1"/>
    <property type="molecule type" value="Genomic_DNA"/>
</dbReference>
<dbReference type="RefSeq" id="WP_011535838.1">
    <property type="nucleotide sequence ID" value="NC_008027.1"/>
</dbReference>
<dbReference type="SMR" id="Q1I4G0"/>
<dbReference type="STRING" id="384676.PSEEN4820"/>
<dbReference type="GeneID" id="32807779"/>
<dbReference type="KEGG" id="pen:PSEEN4820"/>
<dbReference type="eggNOG" id="COG0321">
    <property type="taxonomic scope" value="Bacteria"/>
</dbReference>
<dbReference type="HOGENOM" id="CLU_035168_3_1_6"/>
<dbReference type="OrthoDB" id="9787061at2"/>
<dbReference type="UniPathway" id="UPA00538">
    <property type="reaction ID" value="UER00592"/>
</dbReference>
<dbReference type="Proteomes" id="UP000000658">
    <property type="component" value="Chromosome"/>
</dbReference>
<dbReference type="GO" id="GO:0005737">
    <property type="term" value="C:cytoplasm"/>
    <property type="evidence" value="ECO:0007669"/>
    <property type="project" value="UniProtKB-SubCell"/>
</dbReference>
<dbReference type="GO" id="GO:0033819">
    <property type="term" value="F:lipoyl(octanoyl) transferase activity"/>
    <property type="evidence" value="ECO:0007669"/>
    <property type="project" value="UniProtKB-EC"/>
</dbReference>
<dbReference type="GO" id="GO:0036211">
    <property type="term" value="P:protein modification process"/>
    <property type="evidence" value="ECO:0007669"/>
    <property type="project" value="InterPro"/>
</dbReference>
<dbReference type="CDD" id="cd16444">
    <property type="entry name" value="LipB"/>
    <property type="match status" value="1"/>
</dbReference>
<dbReference type="FunFam" id="3.30.930.10:FF:000020">
    <property type="entry name" value="Octanoyltransferase"/>
    <property type="match status" value="1"/>
</dbReference>
<dbReference type="Gene3D" id="3.30.930.10">
    <property type="entry name" value="Bira Bifunctional Protein, Domain 2"/>
    <property type="match status" value="1"/>
</dbReference>
<dbReference type="HAMAP" id="MF_00013">
    <property type="entry name" value="LipB"/>
    <property type="match status" value="1"/>
</dbReference>
<dbReference type="InterPro" id="IPR045864">
    <property type="entry name" value="aa-tRNA-synth_II/BPL/LPL"/>
</dbReference>
<dbReference type="InterPro" id="IPR004143">
    <property type="entry name" value="BPL_LPL_catalytic"/>
</dbReference>
<dbReference type="InterPro" id="IPR000544">
    <property type="entry name" value="Octanoyltransferase"/>
</dbReference>
<dbReference type="InterPro" id="IPR020605">
    <property type="entry name" value="Octanoyltransferase_CS"/>
</dbReference>
<dbReference type="NCBIfam" id="TIGR00214">
    <property type="entry name" value="lipB"/>
    <property type="match status" value="1"/>
</dbReference>
<dbReference type="NCBIfam" id="NF010922">
    <property type="entry name" value="PRK14342.1"/>
    <property type="match status" value="1"/>
</dbReference>
<dbReference type="PANTHER" id="PTHR10993:SF7">
    <property type="entry name" value="LIPOYLTRANSFERASE 2, MITOCHONDRIAL-RELATED"/>
    <property type="match status" value="1"/>
</dbReference>
<dbReference type="PANTHER" id="PTHR10993">
    <property type="entry name" value="OCTANOYLTRANSFERASE"/>
    <property type="match status" value="1"/>
</dbReference>
<dbReference type="Pfam" id="PF21948">
    <property type="entry name" value="LplA-B_cat"/>
    <property type="match status" value="1"/>
</dbReference>
<dbReference type="PIRSF" id="PIRSF016262">
    <property type="entry name" value="LPLase"/>
    <property type="match status" value="1"/>
</dbReference>
<dbReference type="SUPFAM" id="SSF55681">
    <property type="entry name" value="Class II aaRS and biotin synthetases"/>
    <property type="match status" value="1"/>
</dbReference>
<dbReference type="PROSITE" id="PS51733">
    <property type="entry name" value="BPL_LPL_CATALYTIC"/>
    <property type="match status" value="1"/>
</dbReference>
<dbReference type="PROSITE" id="PS01313">
    <property type="entry name" value="LIPB"/>
    <property type="match status" value="1"/>
</dbReference>
<accession>Q1I4G0</accession>
<feature type="chain" id="PRO_1000001116" description="Octanoyltransferase">
    <location>
        <begin position="1"/>
        <end position="215"/>
    </location>
</feature>
<feature type="domain" description="BPL/LPL catalytic" evidence="2">
    <location>
        <begin position="31"/>
        <end position="206"/>
    </location>
</feature>
<feature type="active site" description="Acyl-thioester intermediate" evidence="1">
    <location>
        <position position="168"/>
    </location>
</feature>
<feature type="binding site" evidence="1">
    <location>
        <begin position="70"/>
        <end position="77"/>
    </location>
    <ligand>
        <name>substrate</name>
    </ligand>
</feature>
<feature type="binding site" evidence="1">
    <location>
        <begin position="137"/>
        <end position="139"/>
    </location>
    <ligand>
        <name>substrate</name>
    </ligand>
</feature>
<feature type="binding site" evidence="1">
    <location>
        <begin position="150"/>
        <end position="152"/>
    </location>
    <ligand>
        <name>substrate</name>
    </ligand>
</feature>
<feature type="site" description="Lowers pKa of active site Cys" evidence="1">
    <location>
        <position position="134"/>
    </location>
</feature>
<sequence>MSGVLGIRDLGLQPYEPVLEAMRRFTEQRGPESQDEVWLVEHPPVFTQGQAGKAEHLLIPGEIPVVQTDRGGQVTYHGPGQLVAYLLLDVRRLSIGVRELVSRIEQTLIDLLASYGVQAVAKPDAPGVYVDGAKIASLGLRIRNGRSFHGLALNVDMDLAPFRRINPCGYAGLAMTQLRDLAGPIELDEVRTRLRGQLVRHLDYAEQTTLTGGID</sequence>
<comment type="function">
    <text evidence="1">Catalyzes the transfer of endogenously produced octanoic acid from octanoyl-acyl-carrier-protein onto the lipoyl domains of lipoate-dependent enzymes. Lipoyl-ACP can also act as a substrate although octanoyl-ACP is likely to be the physiological substrate.</text>
</comment>
<comment type="catalytic activity">
    <reaction evidence="1">
        <text>octanoyl-[ACP] + L-lysyl-[protein] = N(6)-octanoyl-L-lysyl-[protein] + holo-[ACP] + H(+)</text>
        <dbReference type="Rhea" id="RHEA:17665"/>
        <dbReference type="Rhea" id="RHEA-COMP:9636"/>
        <dbReference type="Rhea" id="RHEA-COMP:9685"/>
        <dbReference type="Rhea" id="RHEA-COMP:9752"/>
        <dbReference type="Rhea" id="RHEA-COMP:9928"/>
        <dbReference type="ChEBI" id="CHEBI:15378"/>
        <dbReference type="ChEBI" id="CHEBI:29969"/>
        <dbReference type="ChEBI" id="CHEBI:64479"/>
        <dbReference type="ChEBI" id="CHEBI:78463"/>
        <dbReference type="ChEBI" id="CHEBI:78809"/>
        <dbReference type="EC" id="2.3.1.181"/>
    </reaction>
</comment>
<comment type="pathway">
    <text evidence="1">Protein modification; protein lipoylation via endogenous pathway; protein N(6)-(lipoyl)lysine from octanoyl-[acyl-carrier-protein]: step 1/2.</text>
</comment>
<comment type="subcellular location">
    <subcellularLocation>
        <location evidence="1">Cytoplasm</location>
    </subcellularLocation>
</comment>
<comment type="miscellaneous">
    <text evidence="1">In the reaction, the free carboxyl group of octanoic acid is attached via an amide linkage to the epsilon-amino group of a specific lysine residue of lipoyl domains of lipoate-dependent enzymes.</text>
</comment>
<comment type="similarity">
    <text evidence="1">Belongs to the LipB family.</text>
</comment>
<proteinExistence type="inferred from homology"/>
<gene>
    <name evidence="1" type="primary">lipB</name>
    <name type="ordered locus">PSEEN4820</name>
</gene>
<name>LIPB_PSEE4</name>
<keyword id="KW-0012">Acyltransferase</keyword>
<keyword id="KW-0963">Cytoplasm</keyword>
<keyword id="KW-0808">Transferase</keyword>
<organism>
    <name type="scientific">Pseudomonas entomophila (strain L48)</name>
    <dbReference type="NCBI Taxonomy" id="384676"/>
    <lineage>
        <taxon>Bacteria</taxon>
        <taxon>Pseudomonadati</taxon>
        <taxon>Pseudomonadota</taxon>
        <taxon>Gammaproteobacteria</taxon>
        <taxon>Pseudomonadales</taxon>
        <taxon>Pseudomonadaceae</taxon>
        <taxon>Pseudomonas</taxon>
    </lineage>
</organism>